<feature type="chain" id="PRO_1000096917" description="Protoheme IX farnesyltransferase">
    <location>
        <begin position="1"/>
        <end position="290"/>
    </location>
</feature>
<feature type="transmembrane region" description="Helical" evidence="1">
    <location>
        <begin position="8"/>
        <end position="28"/>
    </location>
</feature>
<feature type="transmembrane region" description="Helical" evidence="1">
    <location>
        <begin position="36"/>
        <end position="56"/>
    </location>
</feature>
<feature type="transmembrane region" description="Helical" evidence="1">
    <location>
        <begin position="81"/>
        <end position="101"/>
    </location>
</feature>
<feature type="transmembrane region" description="Helical" evidence="1">
    <location>
        <begin position="108"/>
        <end position="128"/>
    </location>
</feature>
<feature type="transmembrane region" description="Helical" evidence="1">
    <location>
        <begin position="133"/>
        <end position="153"/>
    </location>
</feature>
<feature type="transmembrane region" description="Helical" evidence="1">
    <location>
        <begin position="163"/>
        <end position="183"/>
    </location>
</feature>
<feature type="transmembrane region" description="Helical" evidence="1">
    <location>
        <begin position="209"/>
        <end position="229"/>
    </location>
</feature>
<feature type="transmembrane region" description="Helical" evidence="1">
    <location>
        <begin position="230"/>
        <end position="247"/>
    </location>
</feature>
<feature type="transmembrane region" description="Helical" evidence="1">
    <location>
        <begin position="270"/>
        <end position="290"/>
    </location>
</feature>
<proteinExistence type="inferred from homology"/>
<protein>
    <recommendedName>
        <fullName evidence="1">Protoheme IX farnesyltransferase</fullName>
        <ecNumber evidence="1">2.5.1.141</ecNumber>
    </recommendedName>
    <alternativeName>
        <fullName evidence="1">Heme B farnesyltransferase</fullName>
    </alternativeName>
    <alternativeName>
        <fullName evidence="1">Heme O synthase</fullName>
    </alternativeName>
</protein>
<reference key="1">
    <citation type="journal article" date="2008" name="BMC Genomics">
        <title>The genome sequence of the fish pathogen Aliivibrio salmonicida strain LFI1238 shows extensive evidence of gene decay.</title>
        <authorList>
            <person name="Hjerde E."/>
            <person name="Lorentzen M.S."/>
            <person name="Holden M.T."/>
            <person name="Seeger K."/>
            <person name="Paulsen S."/>
            <person name="Bason N."/>
            <person name="Churcher C."/>
            <person name="Harris D."/>
            <person name="Norbertczak H."/>
            <person name="Quail M.A."/>
            <person name="Sanders S."/>
            <person name="Thurston S."/>
            <person name="Parkhill J."/>
            <person name="Willassen N.P."/>
            <person name="Thomson N.R."/>
        </authorList>
    </citation>
    <scope>NUCLEOTIDE SEQUENCE [LARGE SCALE GENOMIC DNA]</scope>
    <source>
        <strain>LFI1238</strain>
    </source>
</reference>
<sequence length="290" mass="32347">MFKEYVSLTKPGIIMGNLISVLAGYFLAAKSESITLSLLVYTMLGVALVIASGCVVNNIFDRDIDAKMSRTRNRAIVTGSINIEFAFLFAIIMLLIGTGLLYKMANPLSAVMVLLGYVFYVFFYTMWYKRTSVYGTLVGSVSGAIPPLVGYLAVTNYLSLEAVLLFGLFCLWQMPHSYAIAMFRMKDYQQANIPVLPLVKGIQKARQHIMIYVLVFSVVALGLYAFGHTGYEYLAVVAISCYGWFKVTYRNMDESNYVQWSKSVFKTSLLAITAFSTVLGIELLPFSITF</sequence>
<dbReference type="EC" id="2.5.1.141" evidence="1"/>
<dbReference type="EMBL" id="FM178380">
    <property type="protein sequence ID" value="CAQ80913.1"/>
    <property type="molecule type" value="Genomic_DNA"/>
</dbReference>
<dbReference type="RefSeq" id="WP_012551563.1">
    <property type="nucleotide sequence ID" value="NC_011313.1"/>
</dbReference>
<dbReference type="SMR" id="B6EQE1"/>
<dbReference type="KEGG" id="vsa:VSAL_II0159"/>
<dbReference type="eggNOG" id="COG0109">
    <property type="taxonomic scope" value="Bacteria"/>
</dbReference>
<dbReference type="HOGENOM" id="CLU_029631_0_0_6"/>
<dbReference type="UniPathway" id="UPA00834">
    <property type="reaction ID" value="UER00712"/>
</dbReference>
<dbReference type="Proteomes" id="UP000001730">
    <property type="component" value="Chromosome 2"/>
</dbReference>
<dbReference type="GO" id="GO:0005886">
    <property type="term" value="C:plasma membrane"/>
    <property type="evidence" value="ECO:0007669"/>
    <property type="project" value="UniProtKB-SubCell"/>
</dbReference>
<dbReference type="GO" id="GO:0008495">
    <property type="term" value="F:protoheme IX farnesyltransferase activity"/>
    <property type="evidence" value="ECO:0007669"/>
    <property type="project" value="UniProtKB-UniRule"/>
</dbReference>
<dbReference type="GO" id="GO:0048034">
    <property type="term" value="P:heme O biosynthetic process"/>
    <property type="evidence" value="ECO:0007669"/>
    <property type="project" value="UniProtKB-UniRule"/>
</dbReference>
<dbReference type="CDD" id="cd13957">
    <property type="entry name" value="PT_UbiA_Cox10"/>
    <property type="match status" value="1"/>
</dbReference>
<dbReference type="FunFam" id="1.10.357.140:FF:000001">
    <property type="entry name" value="Protoheme IX farnesyltransferase"/>
    <property type="match status" value="1"/>
</dbReference>
<dbReference type="Gene3D" id="1.10.357.140">
    <property type="entry name" value="UbiA prenyltransferase"/>
    <property type="match status" value="1"/>
</dbReference>
<dbReference type="HAMAP" id="MF_00154">
    <property type="entry name" value="CyoE_CtaB"/>
    <property type="match status" value="1"/>
</dbReference>
<dbReference type="InterPro" id="IPR006369">
    <property type="entry name" value="Protohaem_IX_farnesylTrfase"/>
</dbReference>
<dbReference type="InterPro" id="IPR000537">
    <property type="entry name" value="UbiA_prenyltransferase"/>
</dbReference>
<dbReference type="InterPro" id="IPR030470">
    <property type="entry name" value="UbiA_prenylTrfase_CS"/>
</dbReference>
<dbReference type="InterPro" id="IPR044878">
    <property type="entry name" value="UbiA_sf"/>
</dbReference>
<dbReference type="NCBIfam" id="TIGR01473">
    <property type="entry name" value="cyoE_ctaB"/>
    <property type="match status" value="1"/>
</dbReference>
<dbReference type="NCBIfam" id="NF003348">
    <property type="entry name" value="PRK04375.1-1"/>
    <property type="match status" value="1"/>
</dbReference>
<dbReference type="PANTHER" id="PTHR43448">
    <property type="entry name" value="PROTOHEME IX FARNESYLTRANSFERASE, MITOCHONDRIAL"/>
    <property type="match status" value="1"/>
</dbReference>
<dbReference type="PANTHER" id="PTHR43448:SF2">
    <property type="entry name" value="PROTOHEME IX FARNESYLTRANSFERASE, MITOCHONDRIAL"/>
    <property type="match status" value="1"/>
</dbReference>
<dbReference type="Pfam" id="PF01040">
    <property type="entry name" value="UbiA"/>
    <property type="match status" value="1"/>
</dbReference>
<dbReference type="PROSITE" id="PS00943">
    <property type="entry name" value="UBIA"/>
    <property type="match status" value="1"/>
</dbReference>
<evidence type="ECO:0000255" key="1">
    <source>
        <dbReference type="HAMAP-Rule" id="MF_00154"/>
    </source>
</evidence>
<comment type="function">
    <text evidence="1">Converts heme B (protoheme IX) to heme O by substitution of the vinyl group on carbon 2 of heme B porphyrin ring with a hydroxyethyl farnesyl side group.</text>
</comment>
<comment type="catalytic activity">
    <reaction evidence="1">
        <text>heme b + (2E,6E)-farnesyl diphosphate + H2O = Fe(II)-heme o + diphosphate</text>
        <dbReference type="Rhea" id="RHEA:28070"/>
        <dbReference type="ChEBI" id="CHEBI:15377"/>
        <dbReference type="ChEBI" id="CHEBI:33019"/>
        <dbReference type="ChEBI" id="CHEBI:60344"/>
        <dbReference type="ChEBI" id="CHEBI:60530"/>
        <dbReference type="ChEBI" id="CHEBI:175763"/>
        <dbReference type="EC" id="2.5.1.141"/>
    </reaction>
</comment>
<comment type="pathway">
    <text evidence="1">Porphyrin-containing compound metabolism; heme O biosynthesis; heme O from protoheme: step 1/1.</text>
</comment>
<comment type="subcellular location">
    <subcellularLocation>
        <location evidence="1">Cell inner membrane</location>
        <topology evidence="1">Multi-pass membrane protein</topology>
    </subcellularLocation>
</comment>
<comment type="miscellaneous">
    <text evidence="1">Carbon 2 of the heme B porphyrin ring is defined according to the Fischer nomenclature.</text>
</comment>
<comment type="similarity">
    <text evidence="1">Belongs to the UbiA prenyltransferase family. Protoheme IX farnesyltransferase subfamily.</text>
</comment>
<gene>
    <name evidence="1" type="primary">cyoE</name>
    <name type="ordered locus">VSAL_II0159</name>
</gene>
<accession>B6EQE1</accession>
<keyword id="KW-0997">Cell inner membrane</keyword>
<keyword id="KW-1003">Cell membrane</keyword>
<keyword id="KW-0350">Heme biosynthesis</keyword>
<keyword id="KW-0472">Membrane</keyword>
<keyword id="KW-0808">Transferase</keyword>
<keyword id="KW-0812">Transmembrane</keyword>
<keyword id="KW-1133">Transmembrane helix</keyword>
<organism>
    <name type="scientific">Aliivibrio salmonicida (strain LFI1238)</name>
    <name type="common">Vibrio salmonicida (strain LFI1238)</name>
    <dbReference type="NCBI Taxonomy" id="316275"/>
    <lineage>
        <taxon>Bacteria</taxon>
        <taxon>Pseudomonadati</taxon>
        <taxon>Pseudomonadota</taxon>
        <taxon>Gammaproteobacteria</taxon>
        <taxon>Vibrionales</taxon>
        <taxon>Vibrionaceae</taxon>
        <taxon>Aliivibrio</taxon>
    </lineage>
</organism>
<name>CYOE_ALISL</name>